<sequence length="453" mass="50054">MKDTETRPGRHRAPEPAHPEQPDTTGDTVVTVSGQDWDTVTETLGGAREERIVVNMGPQHPSTHGVLRLILEIEGETVVEARCGIGYLHTGIEKNLEYRTWMQGVTFVTRMDYLSPFYNETAYCLGVERLLGITEQIPERASIVRVLLMELNRISSHLVCLATGGMELGALTPMLFGFRERELILDVFETITGLRMNHAYIRPGGLAQDLPDDGVAKVRELLDLMPKRLRDMEHLLTQNPIFKARTQDIGYLDLTGCMALGITGPVLRSAGLPHDLRKSQPYCGYETYEFDVPTTTGCDCYGRYLIRVEEMKESLKIVEQCLDRLRPGPVMIEDKKLAWPADLKLGADGLGNSPAHIGRIMGSSMEGLIHHFKLVTEGIRVPAGQVYVAVESPRGELGVHMVSDGGTRPYRVHYRDPSFTNLQAVAAMCEGGMVADVIAAVASIDPVMGGVDR</sequence>
<proteinExistence type="inferred from homology"/>
<reference key="1">
    <citation type="journal article" date="2004" name="Proc. Natl. Acad. Sci. U.S.A.">
        <title>The complete genomic sequence of Nocardia farcinica IFM 10152.</title>
        <authorList>
            <person name="Ishikawa J."/>
            <person name="Yamashita A."/>
            <person name="Mikami Y."/>
            <person name="Hoshino Y."/>
            <person name="Kurita H."/>
            <person name="Hotta K."/>
            <person name="Shiba T."/>
            <person name="Hattori M."/>
        </authorList>
    </citation>
    <scope>NUCLEOTIDE SEQUENCE [LARGE SCALE GENOMIC DNA]</scope>
    <source>
        <strain>IFM 10152</strain>
    </source>
</reference>
<dbReference type="EC" id="7.1.1.-" evidence="1"/>
<dbReference type="EMBL" id="AP006618">
    <property type="protein sequence ID" value="BAD57511.1"/>
    <property type="molecule type" value="Genomic_DNA"/>
</dbReference>
<dbReference type="SMR" id="Q5YWD0"/>
<dbReference type="STRING" id="247156.NFA_26640"/>
<dbReference type="KEGG" id="nfa:NFA_26640"/>
<dbReference type="eggNOG" id="COG0649">
    <property type="taxonomic scope" value="Bacteria"/>
</dbReference>
<dbReference type="HOGENOM" id="CLU_015134_1_2_11"/>
<dbReference type="Proteomes" id="UP000006820">
    <property type="component" value="Chromosome"/>
</dbReference>
<dbReference type="GO" id="GO:0005886">
    <property type="term" value="C:plasma membrane"/>
    <property type="evidence" value="ECO:0007669"/>
    <property type="project" value="UniProtKB-SubCell"/>
</dbReference>
<dbReference type="GO" id="GO:0051287">
    <property type="term" value="F:NAD binding"/>
    <property type="evidence" value="ECO:0007669"/>
    <property type="project" value="InterPro"/>
</dbReference>
<dbReference type="GO" id="GO:0050136">
    <property type="term" value="F:NADH:ubiquinone reductase (non-electrogenic) activity"/>
    <property type="evidence" value="ECO:0007669"/>
    <property type="project" value="UniProtKB-UniRule"/>
</dbReference>
<dbReference type="GO" id="GO:0048038">
    <property type="term" value="F:quinone binding"/>
    <property type="evidence" value="ECO:0007669"/>
    <property type="project" value="UniProtKB-KW"/>
</dbReference>
<dbReference type="Gene3D" id="1.10.645.10">
    <property type="entry name" value="Cytochrome-c3 Hydrogenase, chain B"/>
    <property type="match status" value="1"/>
</dbReference>
<dbReference type="HAMAP" id="MF_01358">
    <property type="entry name" value="NDH1_NuoD"/>
    <property type="match status" value="1"/>
</dbReference>
<dbReference type="InterPro" id="IPR001135">
    <property type="entry name" value="NADH_Q_OxRdtase_suD"/>
</dbReference>
<dbReference type="InterPro" id="IPR014029">
    <property type="entry name" value="NADH_UbQ_OxRdtase_49kDa_CS"/>
</dbReference>
<dbReference type="InterPro" id="IPR022885">
    <property type="entry name" value="NDH1_su_D/H"/>
</dbReference>
<dbReference type="InterPro" id="IPR029014">
    <property type="entry name" value="NiFe-Hase_large"/>
</dbReference>
<dbReference type="NCBIfam" id="TIGR01962">
    <property type="entry name" value="NuoD"/>
    <property type="match status" value="1"/>
</dbReference>
<dbReference type="NCBIfam" id="NF004739">
    <property type="entry name" value="PRK06075.1"/>
    <property type="match status" value="1"/>
</dbReference>
<dbReference type="PANTHER" id="PTHR11993:SF10">
    <property type="entry name" value="NADH DEHYDROGENASE [UBIQUINONE] IRON-SULFUR PROTEIN 2, MITOCHONDRIAL"/>
    <property type="match status" value="1"/>
</dbReference>
<dbReference type="PANTHER" id="PTHR11993">
    <property type="entry name" value="NADH-UBIQUINONE OXIDOREDUCTASE 49 KDA SUBUNIT"/>
    <property type="match status" value="1"/>
</dbReference>
<dbReference type="Pfam" id="PF00346">
    <property type="entry name" value="Complex1_49kDa"/>
    <property type="match status" value="1"/>
</dbReference>
<dbReference type="SUPFAM" id="SSF56762">
    <property type="entry name" value="HydB/Nqo4-like"/>
    <property type="match status" value="1"/>
</dbReference>
<dbReference type="PROSITE" id="PS00535">
    <property type="entry name" value="COMPLEX1_49K"/>
    <property type="match status" value="1"/>
</dbReference>
<keyword id="KW-1003">Cell membrane</keyword>
<keyword id="KW-0472">Membrane</keyword>
<keyword id="KW-0520">NAD</keyword>
<keyword id="KW-0874">Quinone</keyword>
<keyword id="KW-1185">Reference proteome</keyword>
<keyword id="KW-1278">Translocase</keyword>
<keyword id="KW-0813">Transport</keyword>
<feature type="chain" id="PRO_0000357875" description="NADH-quinone oxidoreductase subunit D">
    <location>
        <begin position="1"/>
        <end position="453"/>
    </location>
</feature>
<feature type="region of interest" description="Disordered" evidence="2">
    <location>
        <begin position="1"/>
        <end position="30"/>
    </location>
</feature>
<feature type="compositionally biased region" description="Basic and acidic residues" evidence="2">
    <location>
        <begin position="1"/>
        <end position="21"/>
    </location>
</feature>
<accession>Q5YWD0</accession>
<protein>
    <recommendedName>
        <fullName evidence="1">NADH-quinone oxidoreductase subunit D</fullName>
        <ecNumber evidence="1">7.1.1.-</ecNumber>
    </recommendedName>
    <alternativeName>
        <fullName evidence="1">NADH dehydrogenase I subunit D</fullName>
    </alternativeName>
    <alternativeName>
        <fullName evidence="1">NDH-1 subunit D</fullName>
    </alternativeName>
</protein>
<evidence type="ECO:0000255" key="1">
    <source>
        <dbReference type="HAMAP-Rule" id="MF_01358"/>
    </source>
</evidence>
<evidence type="ECO:0000256" key="2">
    <source>
        <dbReference type="SAM" id="MobiDB-lite"/>
    </source>
</evidence>
<name>NUOD_NOCFA</name>
<organism>
    <name type="scientific">Nocardia farcinica (strain IFM 10152)</name>
    <dbReference type="NCBI Taxonomy" id="247156"/>
    <lineage>
        <taxon>Bacteria</taxon>
        <taxon>Bacillati</taxon>
        <taxon>Actinomycetota</taxon>
        <taxon>Actinomycetes</taxon>
        <taxon>Mycobacteriales</taxon>
        <taxon>Nocardiaceae</taxon>
        <taxon>Nocardia</taxon>
    </lineage>
</organism>
<gene>
    <name evidence="1" type="primary">nuoD</name>
    <name type="ordered locus">NFA_26640</name>
</gene>
<comment type="function">
    <text evidence="1">NDH-1 shuttles electrons from NADH, via FMN and iron-sulfur (Fe-S) centers, to quinones in the respiratory chain. The immediate electron acceptor for the enzyme in this species is believed to be a menaquinone. Couples the redox reaction to proton translocation (for every two electrons transferred, four hydrogen ions are translocated across the cytoplasmic membrane), and thus conserves the redox energy in a proton gradient.</text>
</comment>
<comment type="catalytic activity">
    <reaction evidence="1">
        <text>a quinone + NADH + 5 H(+)(in) = a quinol + NAD(+) + 4 H(+)(out)</text>
        <dbReference type="Rhea" id="RHEA:57888"/>
        <dbReference type="ChEBI" id="CHEBI:15378"/>
        <dbReference type="ChEBI" id="CHEBI:24646"/>
        <dbReference type="ChEBI" id="CHEBI:57540"/>
        <dbReference type="ChEBI" id="CHEBI:57945"/>
        <dbReference type="ChEBI" id="CHEBI:132124"/>
    </reaction>
</comment>
<comment type="subunit">
    <text evidence="1">NDH-1 is composed of 14 different subunits. Subunits NuoB, C, D, E, F, and G constitute the peripheral sector of the complex.</text>
</comment>
<comment type="subcellular location">
    <subcellularLocation>
        <location evidence="1">Cell membrane</location>
        <topology evidence="1">Peripheral membrane protein</topology>
        <orientation evidence="1">Cytoplasmic side</orientation>
    </subcellularLocation>
</comment>
<comment type="similarity">
    <text evidence="1">Belongs to the complex I 49 kDa subunit family.</text>
</comment>